<accession>P0C6V5</accession>
<accession>Q0GNB9</accession>
<sequence>MASSLKQGVSPKLRDVILVSKDIPEQLCDALFFYTSHNPKDYADAFAVRQKFDRNLQTGKQFKFETVCGLFLLKGVDKITPGVPAKVLKATSKLADLEDIFGVSPFARKYRELLKTACQWSLTVETLDARAQTLDEIFDPTEILWLQVAAKIQVSAMAMRRLVGEVTAKVMDALGSNMSALFQIFKQQIVRIFQKALAIFENVSELPQRIAALKMAFAKCAKSITVVVMERTLVVREFAGTCLASINGAVAKFFEELPNGFMGAKIFTTLAFFREAAVKIVDNIPNAPRGTKGFEVVGNAKGTQVVVRGMRNDLTLLDQKAEIPVESEGWSAILGGHLCYVFKSGDRFYAAPLSGNFALHDVHCCERVVCLSDGVTPEINDGLILAAIYSSFSVAELVAAIKRGEPFKFLGHKFVYAKDAAVSFTLAKAATIADVLKLFQSARVKVEDVWSSLTEKSFEFWRLAYGKVRNLEEFVKTCFCKAQMAIVILATVLGEGIWHLVSQVIYKVGGLFTKVVDFCEKYWKGFCAQLKRAKLIVTETLCVLKGVAQHCFQLLLDAIQFMYKSFKKCALGRIHGDLLFWKGGVHKIIQEGDEIWFDAIDSIDVEDLGVVQEKLIDFDVCDNVTLPENQPGHMVQIEDDGKNYMFFRFKKDENIYYTPMSQLGAINVVCKAGGKTVTFGETTVQEIPPPDVVFIKVSIECCGEPWNTIFKKAYKEPIEVETDLTVEQLLSVVYEKMCDDLKLFPEAPEPPPFENVTLVDKNGKDLDCIKSCHLIYRDYESDDDIEEEDAEECDTDSGDAEECDTNLECEEEDEDTKVLALIQDPASNKYPLPLDDDYSVYNGCIVHKDALDVVNLPSGEETFVVNNCFEGAVKALPQKVIDVLGDWGEAVDAQEQLCQQESTRVISEKSVEGFTGSCDAMAEQAIVEEQEIVPVVEQSQDVVVFTPADLEVVKETAEEVDEFILISAVPKEEVVSQEKEEPQVEQEPTLVVKAQREKKAKKFKVKPATCEKPKFLEYKTCVGDLAVVIAKALDEFKEFCIVNAANEHMSHGGGVAKAIADFCGPDFVEYCADYVKKHGPQQKLVTPSFVKGIQCVNNVVGPRHGDSNLREKLVAAYKSVLVGGVVNYVVPVLSSGIFGVDFKISIDAMREAFKGCAIRVLLFSLSQEHIDYFDATCKQKTIYLTEDGVKYRSVVLKPGDSLGQFGQVFARNKVVFSADDVEDKEILFIPTTDKTILEYYGLDAQKYVTYLQTLAQKWDVQYRDNFVILEWRDGNCWISSAIVLLQAAKIRFKGFLAEAWAKLLGGDPTDFVAWCYASCNAKVGDFSDANWLLANLAEHFDADYTNALLKKCVSCNCGVKSYELRGLEACIQPVRAPNLLHFKTQYSNCPTCGASSTDEVIEASLPYLLLFATDGPATVDCDENAVGTVVFIGSTNSGHCYTQADGKAFDNLAKDRKFGRKSPYITAMYTRFSLRSENPLLVVEHSKGKAKVVKEDVSNLATSSKASFDDLTDFEQWYDSNIYESLKVQETPDNLDEYVSFTTKEDSKLPLTLKVRGIKSVVDFRSKDGFTYKLTPDTDENSKTPVYYPVLDSISLRAIWVEGSANFVVGHPNYYSKSLRIPTFWENAESFVKMGYKIDGVTMGLWRAEHLNKPNLERIFNIAKKAIVGSSVVTTQCGKILVKAATYVADKVGDGVVRNITDRIKGLCGFTRGHFEKKMSLQFLKTLVFFFFYFLKASSKSLVSSYKIVLCKVVFATLLIVWFIYTSNPVVFTGIRVLDFLFEGSLCGPYNDYGKDSFDVLRYCAGDFTCRVCLHDRDSLHLYKHAYSVEQIYKDAASGINFNWNWLYLVFLILFVKPVAGFVIICYCVKYLVLSSTVLQTGVGFLDWFVKTVFTHFNFMGAGFYFWLFYKIYVQVHHILYCKDVTCEVCKRVARSNRQEVSVVVGGRKQIVHVYTNSGYNFCKRHNWYCRNCDDYGHQNTFMSPEVAGELSEKLKRHVKPTAYAYHVVYEACVVDDFVNLKYKAAIPGKDNASSAVKCFSVTDFLKKAVFLKEALKCEQISNDGFIVCNTQSAHALEEAKNAAVYYAQYLCKPILILDQALYEQLIVEPVSKSVIDKVCSILSNIISVDTAALNYKAGTLRDALLSITKDEEAVDMAIFCHNHEVEYTGDGFTNVIPSYGMDTDKLTPRDRGFLINADASIANLRVKNAPPVVWKFSDLIKLSDSCLKYLISATVKSGGRFFITKSGAKQVISCHTQKLLVEKKAGGVINNTFKWFMSCFKWLFVFYILFTACCLGYYYMEMNKSFVHPMYDVNSTLHVEGFKVIDKGVIREIVSEDNCFSNKFVNFDAFWGKSYENNKNCPIVTVVIDGDGTVAVGVPGFVSWVMDGVMFVHMTQTDRRPWYIPTWFNREIVGYTQDSIITEGSFYTSIALFSARCLYLTASNTPQLYCFNGDNDAPGALPFGSIIPHRVYFQPNGVRLIVPQQILHTPYIVKFVSDSYCRGSVCEYTKPGYCVSLDSQWVLFNDEYISKPGVFCGSTVRELMFNMVSTFFTGVNPNIYIQLATMFLILVVIVLIFAMVIKFQGVFKAYATIVFTIMLVWVINAFVLCVHSYNSVLAVILLVLYCYASMVTSRNTAIIMHCWLVFTFGLIVPTWLACCYLGFILYMYTPLVFWCYGTTKNTRKLYDGNEFVGNYDLAAKSTFVIRGTEFVKLTNEIGDKFEAYLSAYARLKYYSGTGSEQDYLQACRAWLAYALDQYRNSGVEVVYTPPRYSIGVSRLQAGFKKLVSPSSAVEKCIVSVSYRGNNLNGLWLGDSIYCPRHVLGKFSGDQWGDVLNLANNHEFEVVTQNGVTLNVVSRRLKGAVLILQTAVANAETPKYKFVKANCGDSFTIACSYGGTVIGLYPVTMRSNGTIRASFLAGACGSVGFNIEKGVVNFFYMHHLELPNALHTGTDLMGEFYGGYVDEEVAQRVPPDNLVTNNIVAWLYAAIISVKESSFSQPKWLESTTVSIEDYNRWASDNGFTPFSTSTAITKLSAITGVDVCKLLRTIMVKSAQWGSDPILGQYNFEDELTPESVFNQVGGVRLQSSFVRKATSWFWSRCVLACFLFVLCAIVLFTAVPLKFYVHAAVILLMAVLFISFTVKHVMAYMDTFLLPTLITVIIGVCAEVPFIYNTLISQVVIFLSQWYDPVVFDTMVPWMLLPLVLYTAFKCVQGCYMNSFNTSLLMLYQFMKLGFVIYTSSNTLTAYTEGNWELFFELVHTIVLANVSSNSLIGLIVFKCAKWMLYYCNATYFNNYVLMAVMVNGIGWLCTCYFGLYWWVNKVFGLTLGKYNFKVSVDQYRYMCLHKVNPPKTVWEVFTTNILIQGIGGDRVLPIATVQSKLSDVKCTTVVLMQLLTKLNVEANSKMHAYLVELHNKILASDDVGECMDNLLGMLITLFCIDSTIDLGEYCDDILKRSTVLQSVTQEFSHIPSYAEYERAKSIYEKVLADSKNGGVTQQELAAYRKAANIAKSVFDRDLAVQKKLDSMAERAMTTMYKEARVTDRRAKLVSSLHALLFSMLKKIDSEKLNVLFDQANSGVVPLATVPIVCSNKLTLVIPDPETWVKCVEGVHVTYSTVVWNIDCVTDADGTELHPTSTGSGLTYCISGDNIAWPLKVNLTRNGHNKVDVALQNNELMPHGVKTKACVAGVDQAHCSVESKCYYTSISGSSVVAAITSSNPNLKVASFLNEAGNQIYVDLDPPCKFGMKVGDKVEVVYLYFIKNTRSIVRGMVLGAISNVVVLQSKGHETEEVDAVGILSLCSFAVDPADTYCKYVAAGNQPLGNCVKMLTVHNGSGFAITSKPSPTPDQDSYGGASVCLYCRAHIAHPGGAGNLDGRCQFKGSFVQIPTTEKDPVGFCLRNKVCTVCQCWIGYGCQCDSLRQPKPSVQSVAVASGFDKNYLNGYGVAVRLG</sequence>
<evidence type="ECO:0000250" key="1"/>
<evidence type="ECO:0000250" key="2">
    <source>
        <dbReference type="UniProtKB" id="P0C6U8"/>
    </source>
</evidence>
<evidence type="ECO:0000250" key="3">
    <source>
        <dbReference type="UniProtKB" id="P0C6Y1"/>
    </source>
</evidence>
<evidence type="ECO:0000250" key="4">
    <source>
        <dbReference type="UniProtKB" id="P0C6Y3"/>
    </source>
</evidence>
<evidence type="ECO:0000250" key="5">
    <source>
        <dbReference type="UniProtKB" id="P0DTD1"/>
    </source>
</evidence>
<evidence type="ECO:0000255" key="6"/>
<evidence type="ECO:0000255" key="7">
    <source>
        <dbReference type="PROSITE-ProRule" id="PRU00214"/>
    </source>
</evidence>
<evidence type="ECO:0000255" key="8">
    <source>
        <dbReference type="PROSITE-ProRule" id="PRU00444"/>
    </source>
</evidence>
<evidence type="ECO:0000255" key="9">
    <source>
        <dbReference type="PROSITE-ProRule" id="PRU00490"/>
    </source>
</evidence>
<evidence type="ECO:0000255" key="10">
    <source>
        <dbReference type="PROSITE-ProRule" id="PRU00772"/>
    </source>
</evidence>
<evidence type="ECO:0000255" key="11">
    <source>
        <dbReference type="PROSITE-ProRule" id="PRU01291"/>
    </source>
</evidence>
<evidence type="ECO:0000255" key="12">
    <source>
        <dbReference type="PROSITE-ProRule" id="PRU01294"/>
    </source>
</evidence>
<evidence type="ECO:0000255" key="13">
    <source>
        <dbReference type="PROSITE-ProRule" id="PRU01295"/>
    </source>
</evidence>
<evidence type="ECO:0000255" key="14">
    <source>
        <dbReference type="PROSITE-ProRule" id="PRU01296"/>
    </source>
</evidence>
<evidence type="ECO:0000255" key="15">
    <source>
        <dbReference type="PROSITE-ProRule" id="PRU01297"/>
    </source>
</evidence>
<evidence type="ECO:0000255" key="16">
    <source>
        <dbReference type="PROSITE-ProRule" id="PRU01336"/>
    </source>
</evidence>
<evidence type="ECO:0000255" key="17">
    <source>
        <dbReference type="PROSITE-ProRule" id="PRU01337"/>
    </source>
</evidence>
<evidence type="ECO:0000269" key="18">
    <source>
    </source>
</evidence>
<evidence type="ECO:0000305" key="19"/>
<evidence type="ECO:0007744" key="20">
    <source>
        <dbReference type="PDB" id="3EWO"/>
    </source>
</evidence>
<evidence type="ECO:0007744" key="21">
    <source>
        <dbReference type="PDB" id="3EWP"/>
    </source>
</evidence>
<evidence type="ECO:0007744" key="22">
    <source>
        <dbReference type="PDB" id="3LD1"/>
    </source>
</evidence>
<evidence type="ECO:0007829" key="23">
    <source>
        <dbReference type="PDB" id="3EWO"/>
    </source>
</evidence>
<evidence type="ECO:0007829" key="24">
    <source>
        <dbReference type="PDB" id="3LD1"/>
    </source>
</evidence>
<keyword id="KW-0002">3D-structure</keyword>
<keyword id="KW-1072">Activation of host autophagy by virus</keyword>
<keyword id="KW-1015">Disulfide bond</keyword>
<keyword id="KW-1035">Host cytoplasm</keyword>
<keyword id="KW-1038">Host endoplasmic reticulum</keyword>
<keyword id="KW-1043">Host membrane</keyword>
<keyword id="KW-0945">Host-virus interaction</keyword>
<keyword id="KW-0378">Hydrolase</keyword>
<keyword id="KW-0456">Lyase</keyword>
<keyword id="KW-0472">Membrane</keyword>
<keyword id="KW-0479">Metal-binding</keyword>
<keyword id="KW-0645">Protease</keyword>
<keyword id="KW-0677">Repeat</keyword>
<keyword id="KW-0688">Ribosomal frameshifting</keyword>
<keyword id="KW-0694">RNA-binding</keyword>
<keyword id="KW-0788">Thiol protease</keyword>
<keyword id="KW-0812">Transmembrane</keyword>
<keyword id="KW-1133">Transmembrane helix</keyword>
<keyword id="KW-0862">Zinc</keyword>
<keyword id="KW-0863">Zinc-finger</keyword>
<organismHost>
    <name type="scientific">Gallus gallus</name>
    <name type="common">Chicken</name>
    <dbReference type="NCBI Taxonomy" id="9031"/>
</organismHost>
<feature type="chain" id="PRO_0000338336" description="Replicase polyprotein 1a">
    <location>
        <begin position="1"/>
        <end position="3953"/>
    </location>
</feature>
<feature type="chain" id="PRO_0000338337" description="Non-structural protein 2" evidence="1">
    <location>
        <begin position="1"/>
        <end position="673"/>
    </location>
</feature>
<feature type="chain" id="PRO_0000338338" description="Papain-like protease" evidence="1">
    <location>
        <begin position="674"/>
        <end position="2267"/>
    </location>
</feature>
<feature type="chain" id="PRO_0000338339" description="Non-structural protein 4" evidence="1">
    <location>
        <begin position="2268"/>
        <end position="2781"/>
    </location>
</feature>
<feature type="chain" id="PRO_0000338340" description="3C-like proteinase" evidence="1">
    <location>
        <begin position="2782"/>
        <end position="3088"/>
    </location>
</feature>
<feature type="chain" id="PRO_0000338341" description="Non-structural protein 6" evidence="1">
    <location>
        <begin position="3089"/>
        <end position="3381"/>
    </location>
</feature>
<feature type="chain" id="PRO_0000338342" description="Non-structural protein 7" evidence="1">
    <location>
        <begin position="3382"/>
        <end position="3464"/>
    </location>
</feature>
<feature type="chain" id="PRO_0000338343" description="Non-structural protein 8" evidence="1">
    <location>
        <begin position="3465"/>
        <end position="3674"/>
    </location>
</feature>
<feature type="chain" id="PRO_0000338344" description="Non-structural protein 9" evidence="1">
    <location>
        <begin position="3675"/>
        <end position="3785"/>
    </location>
</feature>
<feature type="chain" id="PRO_0000338345" description="Non-structural protein 10" evidence="1">
    <location>
        <begin position="3786"/>
        <end position="3930"/>
    </location>
</feature>
<feature type="chain" id="PRO_0000338346" description="Non-structural protein 11" evidence="6">
    <location>
        <begin position="3931"/>
        <end position="3953"/>
    </location>
</feature>
<feature type="topological domain" description="Cytoplasmic" evidence="2">
    <location>
        <begin position="1"/>
        <end position="1752"/>
    </location>
</feature>
<feature type="transmembrane region" description="Helical" evidence="6">
    <location>
        <begin position="1753"/>
        <end position="1773"/>
    </location>
</feature>
<feature type="topological domain" description="Lumenal" evidence="2">
    <location>
        <begin position="1774"/>
        <end position="1845"/>
    </location>
</feature>
<feature type="transmembrane region" description="Helical" evidence="6">
    <location>
        <begin position="1846"/>
        <end position="1866"/>
    </location>
</feature>
<feature type="topological domain" description="Cytoplasmic" evidence="2">
    <location>
        <begin position="1867"/>
        <end position="2282"/>
    </location>
</feature>
<feature type="transmembrane region" description="Helical" evidence="6">
    <location>
        <begin position="2283"/>
        <end position="2303"/>
    </location>
</feature>
<feature type="topological domain" description="Lumenal" evidence="2">
    <location>
        <begin position="2304"/>
        <end position="2561"/>
    </location>
</feature>
<feature type="transmembrane region" description="Helical" evidence="6">
    <location>
        <begin position="2562"/>
        <end position="2582"/>
    </location>
</feature>
<feature type="topological domain" description="Cytoplasmic" evidence="2">
    <location>
        <begin position="2583"/>
        <end position="2613"/>
    </location>
</feature>
<feature type="transmembrane region" description="Helical" evidence="6">
    <location>
        <begin position="2614"/>
        <end position="2634"/>
    </location>
</feature>
<feature type="topological domain" description="Lumenal" evidence="2">
    <location>
        <begin position="2635"/>
        <end position="2645"/>
    </location>
</feature>
<feature type="transmembrane region" description="Helical" evidence="6">
    <location>
        <begin position="2646"/>
        <end position="2666"/>
    </location>
</feature>
<feature type="topological domain" description="Cytoplasmic" evidence="2">
    <location>
        <begin position="2667"/>
        <end position="3098"/>
    </location>
</feature>
<feature type="transmembrane region" description="Helical" evidence="6">
    <location>
        <begin position="3099"/>
        <end position="3119"/>
    </location>
</feature>
<feature type="topological domain" description="Lumenal" evidence="2">
    <location>
        <begin position="3120"/>
        <end position="3123"/>
    </location>
</feature>
<feature type="transmembrane region" description="Helical" evidence="6">
    <location>
        <begin position="3124"/>
        <end position="3144"/>
    </location>
</feature>
<feature type="topological domain" description="Cytoplasmic" evidence="2">
    <location>
        <begin position="3145"/>
        <end position="3153"/>
    </location>
</feature>
<feature type="transmembrane region" description="Helical" evidence="6">
    <location>
        <begin position="3154"/>
        <end position="3174"/>
    </location>
</feature>
<feature type="topological domain" description="Lumenal" evidence="2">
    <location>
        <begin position="3175"/>
        <end position="3190"/>
    </location>
</feature>
<feature type="transmembrane region" description="Helical" evidence="6">
    <location>
        <begin position="3191"/>
        <end position="3211"/>
    </location>
</feature>
<feature type="topological domain" description="Cytoplasmic" evidence="2">
    <location>
        <begin position="3212"/>
        <end position="3259"/>
    </location>
</feature>
<feature type="transmembrane region" description="Helical" evidence="6">
    <location>
        <begin position="3260"/>
        <end position="3280"/>
    </location>
</feature>
<feature type="topological domain" description="Lumenal" evidence="2">
    <location>
        <begin position="3281"/>
        <end position="3298"/>
    </location>
</feature>
<feature type="transmembrane region" description="Helical" evidence="6">
    <location>
        <begin position="3299"/>
        <end position="3319"/>
    </location>
</feature>
<feature type="topological domain" description="Cytoplasmic" evidence="2">
    <location>
        <begin position="3320"/>
        <end position="3953"/>
    </location>
</feature>
<feature type="domain" description="Ubiquitin-like 1" evidence="7">
    <location>
        <begin position="675"/>
        <end position="780"/>
    </location>
</feature>
<feature type="domain" description="Macro" evidence="9">
    <location>
        <begin position="1005"/>
        <end position="1181"/>
    </location>
</feature>
<feature type="domain" description="Ubiquitin-like 2" evidence="7">
    <location>
        <begin position="1177"/>
        <end position="1229"/>
    </location>
</feature>
<feature type="domain" description="Peptidase C16" evidence="8">
    <location>
        <begin position="1238"/>
        <end position="1499"/>
    </location>
</feature>
<feature type="domain" description="3Ecto" evidence="17">
    <location>
        <begin position="1771"/>
        <end position="1835"/>
    </location>
</feature>
<feature type="domain" description="CoV Nsp3 Y" evidence="16">
    <location>
        <begin position="1913"/>
        <end position="2265"/>
    </location>
</feature>
<feature type="domain" description="Nsp4C" evidence="11">
    <location>
        <begin position="2686"/>
        <end position="2781"/>
    </location>
</feature>
<feature type="domain" description="Peptidase C30" evidence="10">
    <location>
        <begin position="2782"/>
        <end position="3088"/>
    </location>
</feature>
<feature type="domain" description="RdRp Nsp7 cofactor" evidence="12">
    <location>
        <begin position="3382"/>
        <end position="3464"/>
    </location>
</feature>
<feature type="domain" description="RdRp Nsp8 cofactor" evidence="13">
    <location>
        <begin position="3465"/>
        <end position="3674"/>
    </location>
</feature>
<feature type="domain" description="Nsp9 ssRNA-binding" evidence="14">
    <location>
        <begin position="3675"/>
        <end position="3785"/>
    </location>
</feature>
<feature type="domain" description="ExoN/MTase coactivator" evidence="15">
    <location>
        <begin position="3787"/>
        <end position="3928"/>
    </location>
</feature>
<feature type="zinc finger region" description="C4-type; degenerate" evidence="8">
    <location>
        <begin position="1355"/>
        <end position="1392"/>
    </location>
</feature>
<feature type="zinc finger region" evidence="1">
    <location>
        <begin position="3860"/>
        <end position="3880"/>
    </location>
</feature>
<feature type="zinc finger region" evidence="1">
    <location>
        <begin position="3906"/>
        <end position="3919"/>
    </location>
</feature>
<feature type="region of interest" description="HD1" evidence="2">
    <location>
        <begin position="1753"/>
        <end position="1866"/>
    </location>
</feature>
<feature type="region of interest" description="Y1" evidence="16">
    <location>
        <begin position="1913"/>
        <end position="2003"/>
    </location>
</feature>
<feature type="region of interest" description="ZF1" evidence="16">
    <location>
        <begin position="1917"/>
        <end position="1930"/>
    </location>
</feature>
<feature type="region of interest" description="ZF2" evidence="16">
    <location>
        <begin position="1963"/>
        <end position="1973"/>
    </location>
</feature>
<feature type="region of interest" description="CoV-Y" evidence="16">
    <location>
        <begin position="2004"/>
        <end position="2265"/>
    </location>
</feature>
<feature type="region of interest" description="Y2" evidence="16">
    <location>
        <begin position="2004"/>
        <end position="2106"/>
    </location>
</feature>
<feature type="region of interest" description="Y3" evidence="16">
    <location>
        <begin position="2107"/>
        <end position="2165"/>
    </location>
</feature>
<feature type="region of interest" description="Y4" evidence="16">
    <location>
        <begin position="2166"/>
        <end position="2265"/>
    </location>
</feature>
<feature type="region of interest" description="HD2" evidence="2">
    <location>
        <begin position="2283"/>
        <end position="2666"/>
    </location>
</feature>
<feature type="region of interest" description="HD3" evidence="2">
    <location>
        <begin position="3099"/>
        <end position="3319"/>
    </location>
</feature>
<feature type="active site" description="For PL-PRO activity" evidence="8">
    <location>
        <position position="1276"/>
    </location>
</feature>
<feature type="active site" description="For PL-PRO activity" evidence="8">
    <location>
        <position position="1439"/>
    </location>
</feature>
<feature type="active site" description="For PL-PRO activity" evidence="8">
    <location>
        <position position="1450"/>
    </location>
</feature>
<feature type="active site" description="For 3CL-PRO activity" evidence="10">
    <location>
        <position position="2822"/>
    </location>
</feature>
<feature type="active site" description="For 3CL-PRO activity" evidence="10">
    <location>
        <position position="2924"/>
    </location>
</feature>
<feature type="binding site" evidence="16">
    <location>
        <position position="1917"/>
    </location>
    <ligand>
        <name>Zn(2+)</name>
        <dbReference type="ChEBI" id="CHEBI:29105"/>
        <label>1</label>
    </ligand>
</feature>
<feature type="binding site" evidence="16">
    <location>
        <position position="1922"/>
    </location>
    <ligand>
        <name>Zn(2+)</name>
        <dbReference type="ChEBI" id="CHEBI:29105"/>
        <label>1</label>
    </ligand>
</feature>
<feature type="binding site" evidence="16">
    <location>
        <position position="1927"/>
    </location>
    <ligand>
        <name>Zn(2+)</name>
        <dbReference type="ChEBI" id="CHEBI:29105"/>
        <label>1</label>
    </ligand>
</feature>
<feature type="binding site" evidence="16">
    <location>
        <position position="1930"/>
    </location>
    <ligand>
        <name>Zn(2+)</name>
        <dbReference type="ChEBI" id="CHEBI:29105"/>
        <label>1</label>
    </ligand>
</feature>
<feature type="binding site" evidence="16">
    <location>
        <position position="1963"/>
    </location>
    <ligand>
        <name>Zn(2+)</name>
        <dbReference type="ChEBI" id="CHEBI:29105"/>
        <label>2</label>
    </ligand>
</feature>
<feature type="binding site" evidence="16">
    <location>
        <position position="1966"/>
    </location>
    <ligand>
        <name>Zn(2+)</name>
        <dbReference type="ChEBI" id="CHEBI:29105"/>
        <label>2</label>
    </ligand>
</feature>
<feature type="binding site" evidence="16">
    <location>
        <position position="1970"/>
    </location>
    <ligand>
        <name>Zn(2+)</name>
        <dbReference type="ChEBI" id="CHEBI:29105"/>
        <label>2</label>
    </ligand>
</feature>
<feature type="binding site" evidence="16">
    <location>
        <position position="1973"/>
    </location>
    <ligand>
        <name>Zn(2+)</name>
        <dbReference type="ChEBI" id="CHEBI:29105"/>
        <label>2</label>
    </ligand>
</feature>
<feature type="binding site" evidence="15">
    <location>
        <position position="3860"/>
    </location>
    <ligand>
        <name>Zn(2+)</name>
        <dbReference type="ChEBI" id="CHEBI:29105"/>
        <label>3</label>
    </ligand>
</feature>
<feature type="binding site" evidence="15">
    <location>
        <position position="3863"/>
    </location>
    <ligand>
        <name>Zn(2+)</name>
        <dbReference type="ChEBI" id="CHEBI:29105"/>
        <label>3</label>
    </ligand>
</feature>
<feature type="binding site" evidence="15">
    <location>
        <position position="3869"/>
    </location>
    <ligand>
        <name>Zn(2+)</name>
        <dbReference type="ChEBI" id="CHEBI:29105"/>
        <label>3</label>
    </ligand>
</feature>
<feature type="binding site" evidence="15">
    <location>
        <position position="3880"/>
    </location>
    <ligand>
        <name>Zn(2+)</name>
        <dbReference type="ChEBI" id="CHEBI:29105"/>
        <label>3</label>
    </ligand>
</feature>
<feature type="binding site" evidence="15">
    <location>
        <position position="3906"/>
    </location>
    <ligand>
        <name>Zn(2+)</name>
        <dbReference type="ChEBI" id="CHEBI:29105"/>
        <label>4</label>
    </ligand>
</feature>
<feature type="binding site" evidence="15">
    <location>
        <position position="3909"/>
    </location>
    <ligand>
        <name>Zn(2+)</name>
        <dbReference type="ChEBI" id="CHEBI:29105"/>
        <label>4</label>
    </ligand>
</feature>
<feature type="binding site" evidence="15">
    <location>
        <position position="3917"/>
    </location>
    <ligand>
        <name>Zn(2+)</name>
        <dbReference type="ChEBI" id="CHEBI:29105"/>
        <label>4</label>
    </ligand>
</feature>
<feature type="binding site" evidence="15">
    <location>
        <position position="3919"/>
    </location>
    <ligand>
        <name>Zn(2+)</name>
        <dbReference type="ChEBI" id="CHEBI:29105"/>
        <label>4</label>
    </ligand>
</feature>
<feature type="site" description="Cleavage; by PL-PRO" evidence="2">
    <location>
        <begin position="673"/>
        <end position="674"/>
    </location>
</feature>
<feature type="site" description="Cleavage; by PL-PRO" evidence="2">
    <location>
        <begin position="2267"/>
        <end position="2268"/>
    </location>
</feature>
<feature type="site" description="Cleavage; by 3CL-PRO" evidence="2">
    <location>
        <begin position="2781"/>
        <end position="2782"/>
    </location>
</feature>
<feature type="site" description="Cleavage; by 3CL-PRO" evidence="2">
    <location>
        <begin position="3088"/>
        <end position="3089"/>
    </location>
</feature>
<feature type="site" description="Cleavage; by 3CL-PRO" evidence="2">
    <location>
        <begin position="3381"/>
        <end position="3382"/>
    </location>
</feature>
<feature type="site" description="Cleavage; by 3CL-PRO" evidence="2">
    <location>
        <begin position="3464"/>
        <end position="3465"/>
    </location>
</feature>
<feature type="site" description="Cleavage; by 3CL-PRO" evidence="2">
    <location>
        <begin position="3674"/>
        <end position="3675"/>
    </location>
</feature>
<feature type="site" description="Cleavage; by 3CL-PRO" evidence="2">
    <location>
        <begin position="3785"/>
        <end position="3786"/>
    </location>
</feature>
<feature type="site" description="Cleavage; by 3CL-PRO" evidence="2">
    <location>
        <begin position="3930"/>
        <end position="3931"/>
    </location>
</feature>
<feature type="disulfide bond" evidence="17">
    <location>
        <begin position="1787"/>
        <end position="1813"/>
    </location>
</feature>
<feature type="disulfide bond" evidence="17">
    <location>
        <begin position="1804"/>
        <end position="1810"/>
    </location>
</feature>
<feature type="sequence variant">
    <original>L</original>
    <variation>S</variation>
    <location>
        <position position="807"/>
    </location>
</feature>
<feature type="sequence variant">
    <original>S</original>
    <variation>F</variation>
    <location>
        <position position="1618"/>
    </location>
</feature>
<feature type="sequence variant">
    <original>S</original>
    <variation>A</variation>
    <location>
        <position position="1739"/>
    </location>
</feature>
<feature type="sequence variant">
    <original>M</original>
    <variation>L</variation>
    <location>
        <position position="2631"/>
    </location>
</feature>
<feature type="sequence variant">
    <original>S</original>
    <variation>P</variation>
    <location>
        <position position="2774"/>
    </location>
</feature>
<feature type="strand" evidence="24">
    <location>
        <begin position="16"/>
        <end position="20"/>
    </location>
</feature>
<feature type="helix" evidence="24">
    <location>
        <begin position="25"/>
        <end position="32"/>
    </location>
</feature>
<feature type="helix" evidence="24">
    <location>
        <begin position="42"/>
        <end position="58"/>
    </location>
</feature>
<feature type="strand" evidence="24">
    <location>
        <begin position="62"/>
        <end position="66"/>
    </location>
</feature>
<feature type="strand" evidence="24">
    <location>
        <begin position="69"/>
        <end position="78"/>
    </location>
</feature>
<feature type="strand" evidence="24">
    <location>
        <begin position="81"/>
        <end position="83"/>
    </location>
</feature>
<feature type="strand" evidence="24">
    <location>
        <begin position="86"/>
        <end position="88"/>
    </location>
</feature>
<feature type="helix" evidence="24">
    <location>
        <begin position="94"/>
        <end position="101"/>
    </location>
</feature>
<feature type="helix" evidence="24">
    <location>
        <begin position="105"/>
        <end position="115"/>
    </location>
</feature>
<feature type="helix" evidence="24">
    <location>
        <begin position="117"/>
        <end position="120"/>
    </location>
</feature>
<feature type="helix" evidence="24">
    <location>
        <begin position="124"/>
        <end position="133"/>
    </location>
</feature>
<feature type="helix" evidence="24">
    <location>
        <begin position="134"/>
        <end position="136"/>
    </location>
</feature>
<feature type="helix" evidence="24">
    <location>
        <begin position="140"/>
        <end position="146"/>
    </location>
</feature>
<feature type="helix" evidence="24">
    <location>
        <begin position="152"/>
        <end position="174"/>
    </location>
</feature>
<feature type="helix" evidence="24">
    <location>
        <begin position="176"/>
        <end position="178"/>
    </location>
</feature>
<feature type="helix" evidence="24">
    <location>
        <begin position="179"/>
        <end position="182"/>
    </location>
</feature>
<feature type="turn" evidence="24">
    <location>
        <begin position="186"/>
        <end position="188"/>
    </location>
</feature>
<feature type="helix" evidence="24">
    <location>
        <begin position="189"/>
        <end position="197"/>
    </location>
</feature>
<feature type="strand" evidence="24">
    <location>
        <begin position="199"/>
        <end position="202"/>
    </location>
</feature>
<feature type="helix" evidence="24">
    <location>
        <begin position="206"/>
        <end position="219"/>
    </location>
</feature>
<feature type="strand" evidence="24">
    <location>
        <begin position="226"/>
        <end position="229"/>
    </location>
</feature>
<feature type="strand" evidence="24">
    <location>
        <begin position="232"/>
        <end position="235"/>
    </location>
</feature>
<feature type="helix" evidence="24">
    <location>
        <begin position="236"/>
        <end position="238"/>
    </location>
</feature>
<feature type="helix" evidence="24">
    <location>
        <begin position="244"/>
        <end position="255"/>
    </location>
</feature>
<feature type="helix" evidence="24">
    <location>
        <begin position="261"/>
        <end position="263"/>
    </location>
</feature>
<feature type="strand" evidence="24">
    <location>
        <begin position="265"/>
        <end position="267"/>
    </location>
</feature>
<feature type="strand" evidence="24">
    <location>
        <begin position="270"/>
        <end position="272"/>
    </location>
</feature>
<feature type="strand" evidence="24">
    <location>
        <begin position="277"/>
        <end position="283"/>
    </location>
</feature>
<feature type="strand" evidence="24">
    <location>
        <begin position="292"/>
        <end position="299"/>
    </location>
</feature>
<feature type="strand" evidence="24">
    <location>
        <begin position="306"/>
        <end position="310"/>
    </location>
</feature>
<feature type="strand" evidence="24">
    <location>
        <begin position="314"/>
        <end position="320"/>
    </location>
</feature>
<feature type="strand" evidence="24">
    <location>
        <begin position="327"/>
        <end position="334"/>
    </location>
</feature>
<feature type="strand" evidence="24">
    <location>
        <begin position="337"/>
        <end position="344"/>
    </location>
</feature>
<feature type="strand" evidence="24">
    <location>
        <begin position="347"/>
        <end position="354"/>
    </location>
</feature>
<feature type="strand" evidence="24">
    <location>
        <begin position="363"/>
        <end position="367"/>
    </location>
</feature>
<feature type="strand" evidence="23">
    <location>
        <begin position="1017"/>
        <end position="1023"/>
    </location>
</feature>
<feature type="helix" evidence="23">
    <location>
        <begin position="1025"/>
        <end position="1035"/>
    </location>
</feature>
<feature type="strand" evidence="23">
    <location>
        <begin position="1037"/>
        <end position="1044"/>
    </location>
</feature>
<feature type="helix" evidence="23">
    <location>
        <begin position="1054"/>
        <end position="1063"/>
    </location>
</feature>
<feature type="helix" evidence="23">
    <location>
        <begin position="1065"/>
        <end position="1078"/>
    </location>
</feature>
<feature type="strand" evidence="23">
    <location>
        <begin position="1082"/>
        <end position="1086"/>
    </location>
</feature>
<feature type="strand" evidence="23">
    <location>
        <begin position="1093"/>
        <end position="1099"/>
    </location>
</feature>
<feature type="helix" evidence="23">
    <location>
        <begin position="1109"/>
        <end position="1120"/>
    </location>
</feature>
<feature type="strand" evidence="23">
    <location>
        <begin position="1127"/>
        <end position="1131"/>
    </location>
</feature>
<feature type="helix" evidence="23">
    <location>
        <begin position="1142"/>
        <end position="1153"/>
    </location>
</feature>
<feature type="strand" evidence="23">
    <location>
        <begin position="1159"/>
        <end position="1165"/>
    </location>
</feature>
<feature type="helix" evidence="23">
    <location>
        <begin position="1167"/>
        <end position="1176"/>
    </location>
</feature>
<gene>
    <name type="ORF">1a</name>
</gene>
<reference key="1">
    <citation type="submission" date="2006-06" db="EMBL/GenBank/DDBJ databases">
        <title>Avian infectious bronchitis virus strain M41.</title>
        <authorList>
            <person name="Mondal S.P."/>
            <person name="Buckles E.L."/>
        </authorList>
    </citation>
    <scope>NUCLEOTIDE SEQUENCE [GENOMIC RNA]</scope>
</reference>
<reference key="2">
    <citation type="journal article" date="2006" name="J. Virol. Methods">
        <title>Development and evaluation of a real-time Taqman RT-PCR assay for the detection of infectious bronchitis virus from infected chickens.</title>
        <authorList>
            <person name="Callison S.A."/>
            <person name="Hilt D.A."/>
            <person name="Boynton T.O."/>
            <person name="Sample B.F."/>
            <person name="Robison R."/>
            <person name="Swayne D.E."/>
            <person name="Jackwood M.W."/>
        </authorList>
    </citation>
    <scope>NUCLEOTIDE SEQUENCE [GENOMIC RNA]</scope>
</reference>
<reference key="3">
    <citation type="journal article" date="2008" name="J. Virol.">
        <title>Structures of two coronavirus main proteases: implications for substrate binding and antiviral drug design.</title>
        <authorList>
            <person name="Xue X."/>
            <person name="Yu H."/>
            <person name="Yang H."/>
            <person name="Xue F."/>
            <person name="Wu Z."/>
            <person name="Shen W."/>
            <person name="Li J."/>
            <person name="Zhou Z."/>
            <person name="Ding Y."/>
            <person name="Zhao Q."/>
            <person name="Zhang X.C."/>
            <person name="Liao M."/>
            <person name="Bartlam M."/>
            <person name="Rao Z."/>
        </authorList>
    </citation>
    <scope>X-RAY CRYSTALLOGRAPHY (2.00 ANGSTROMS) OF 2782-3088</scope>
    <scope>SUBUNIT (3C-LIKE PROTEINASE)</scope>
</reference>
<reference evidence="20 21" key="4">
    <citation type="journal article" date="2009" name="J. Virol.">
        <title>Crystal structures of two coronavirus ADP-ribose-1''-monophosphatases and their complexes with ADP-Ribose: a systematic structural analysis of the viral ADRP domain.</title>
        <authorList>
            <person name="Xu Y."/>
            <person name="Cong L."/>
            <person name="Chen C."/>
            <person name="Wei L."/>
            <person name="Zhao Q."/>
            <person name="Xu X."/>
            <person name="Ma Y."/>
            <person name="Bartlam M."/>
            <person name="Rao Z."/>
        </authorList>
    </citation>
    <scope>X-RAY CRYSTALLOGRAPHY (1.80 ANGSTROMS) OF 1005-1178</scope>
</reference>
<reference evidence="22" key="5">
    <citation type="submission" date="2010-01" db="PDB data bank">
        <title>IBV nsp2 is an endosome-associated protein and viral pathogenicity factor.</title>
        <authorList>
            <person name="Xu Y."/>
            <person name="Ye Z."/>
            <person name="Wei L."/>
            <person name="Cong L."/>
            <person name="Fu J."/>
            <person name="Chen C."/>
            <person name="Yang A."/>
            <person name="Wu W."/>
            <person name="Tang H."/>
            <person name="Bartlam M."/>
            <person name="Rao Z."/>
        </authorList>
    </citation>
    <scope>X-RAY CRYSTALLOGRAPHY (2.50 ANGSTROMS) OF 13-371</scope>
</reference>
<protein>
    <recommendedName>
        <fullName>Replicase polyprotein 1a</fullName>
        <shortName>pp1a</shortName>
    </recommendedName>
    <alternativeName>
        <fullName>ORF1a polyprotein</fullName>
    </alternativeName>
    <component>
        <recommendedName>
            <fullName>Non-structural protein 2</fullName>
            <shortName>nsp2</shortName>
        </recommendedName>
        <alternativeName>
            <fullName>p87</fullName>
        </alternativeName>
    </component>
    <component>
        <recommendedName>
            <fullName>Papain-like protease</fullName>
            <shortName>PL-PRO</shortName>
            <ecNumber evidence="2">3.4.19.12</ecNumber>
            <ecNumber evidence="2">3.4.22.-</ecNumber>
        </recommendedName>
        <alternativeName>
            <fullName>Non-structural protein 3</fullName>
            <shortName>nsp3</shortName>
        </alternativeName>
        <alternativeName>
            <fullName>p195</fullName>
        </alternativeName>
    </component>
    <component>
        <recommendedName>
            <fullName>Non-structural protein 4</fullName>
            <shortName>nsp4</shortName>
        </recommendedName>
        <alternativeName>
            <fullName>Peptide HD2</fullName>
        </alternativeName>
        <alternativeName>
            <fullName>p41</fullName>
        </alternativeName>
    </component>
    <component>
        <recommendedName>
            <fullName>3C-like proteinase</fullName>
            <shortName>3CL-PRO</shortName>
            <shortName>3CLp</shortName>
            <ecNumber>3.4.22.-</ecNumber>
        </recommendedName>
        <alternativeName>
            <fullName>Main protease</fullName>
            <shortName>Mpro</shortName>
        </alternativeName>
        <alternativeName>
            <fullName>Non-structural protein 5</fullName>
            <shortName>nsp5</shortName>
        </alternativeName>
        <alternativeName>
            <fullName>p33</fullName>
        </alternativeName>
    </component>
    <component>
        <recommendedName>
            <fullName>Non-structural protein 6</fullName>
            <shortName>nsp6</shortName>
        </recommendedName>
        <alternativeName>
            <fullName>p34</fullName>
        </alternativeName>
    </component>
    <component>
        <recommendedName>
            <fullName>Non-structural protein 7</fullName>
            <shortName>nsp7</shortName>
        </recommendedName>
        <alternativeName>
            <fullName>p9</fullName>
        </alternativeName>
    </component>
    <component>
        <recommendedName>
            <fullName>Non-structural protein 8</fullName>
            <shortName>nsp8</shortName>
        </recommendedName>
        <alternativeName>
            <fullName>p24</fullName>
        </alternativeName>
    </component>
    <component>
        <recommendedName>
            <fullName>Non-structural protein 9</fullName>
            <shortName>nsp9</shortName>
        </recommendedName>
        <alternativeName>
            <fullName>p10</fullName>
        </alternativeName>
    </component>
    <component>
        <recommendedName>
            <fullName>Non-structural protein 10</fullName>
            <shortName>nsp10</shortName>
        </recommendedName>
        <alternativeName>
            <fullName>Growth factor-like peptide</fullName>
            <shortName>GFL</shortName>
        </alternativeName>
        <alternativeName>
            <fullName>p16</fullName>
        </alternativeName>
    </component>
    <component>
        <recommendedName>
            <fullName>Non-structural protein 11</fullName>
            <shortName>nsp11</shortName>
        </recommendedName>
    </component>
</protein>
<organism>
    <name type="scientific">Avian infectious bronchitis virus (strain M41)</name>
    <name type="common">IBV</name>
    <dbReference type="NCBI Taxonomy" id="11127"/>
    <lineage>
        <taxon>Viruses</taxon>
        <taxon>Riboviria</taxon>
        <taxon>Orthornavirae</taxon>
        <taxon>Pisuviricota</taxon>
        <taxon>Pisoniviricetes</taxon>
        <taxon>Nidovirales</taxon>
        <taxon>Cornidovirineae</taxon>
        <taxon>Coronaviridae</taxon>
        <taxon>Orthocoronavirinae</taxon>
        <taxon>Gammacoronavirus</taxon>
        <taxon>Igacovirus</taxon>
        <taxon>Avian coronavirus</taxon>
    </lineage>
</organism>
<comment type="function">
    <molecule>Isoform Replicase polyprotein 1a</molecule>
    <text evidence="19">Multifunctional protein involved in the transcription and replication of viral RNAs. Contains the proteinases responsible for the cleavages of the polyprotein.</text>
</comment>
<comment type="function">
    <molecule>Non-structural protein 2</molecule>
    <text evidence="2">May play a role in the modulation of host cell survival signaling pathway by interacting with host PHB and PHB2 (By similarity). Indeed, these two proteins play a role in maintaining the functional integrity of the mitochondria and protecting cells from various stresses (By similarity).</text>
</comment>
<comment type="function">
    <molecule>Papain-like protease</molecule>
    <text evidence="2">Responsible for the cleavages located at the N-terminus of the replicase polyprotein (By similarity). In addition, PL-PRO possesses a deubiquitinating/deISGylating activity and processes both 'Lys-48'- and 'Lys-63'-linked polyubiquitin chains from cellular substrates (By similarity).</text>
</comment>
<comment type="function">
    <molecule>Non-structural protein 4</molecule>
    <text evidence="2">Plays a role in host membrane rearrangement that leads to creation of cytoplasmic double-membrane vesicles (DMV) necessary for viral replication (By similarity). Alone is able to induce paired membranes (By similarity). Coexpression of nsp3 and nsp4 does not result in the formation of DMVs (By similarity).</text>
</comment>
<comment type="function">
    <molecule>3C-like proteinase</molecule>
    <text evidence="10">Responsible for the majority of cleavages as it cleaves the C-terminus of replicase polyprotein at 11 sites. Recognizes substrates containing the core sequence [ILMVF]-Q-|-[SGACN]. Inhibited by the substrate-analog Cbz-Val-Asn-Ser-Thr-Leu-Gln-CMK.</text>
</comment>
<comment type="function">
    <molecule>Non-structural protein 7</molecule>
    <text evidence="2">Forms a hexadecamer with nsp8 (8 subunits of each) that may participate in viral replication by acting as a primase. Alternatively, may synthesize substantially longer products than oligonucleotide primers.</text>
</comment>
<comment type="function">
    <molecule>Non-structural protein 8</molecule>
    <text evidence="2">Forms a hexadecamer with nsp7 (8 subunits of each) that may participate in viral replication by acting as a primase. Alternatively, may synthesize substantially longer products than oligonucleotide primers.</text>
</comment>
<comment type="function">
    <molecule>Non-structural protein 9</molecule>
    <text evidence="2">Plays an essential role in viral replication by forming a homodimer that binds single-stranded RNA.</text>
</comment>
<comment type="function">
    <molecule>Non-structural protein 10</molecule>
    <text evidence="2">Plays a pivotal role in viral transcription by stimulating both nsp14 3'-5' exoribonuclease and nsp16 2'-O-methyltransferase activities (By similarity). Therefore plays an essential role in viral mRNAs cap methylation (By similarity).</text>
</comment>
<comment type="catalytic activity">
    <molecule>Papain-like protease</molecule>
    <reaction evidence="2">
        <text>Thiol-dependent hydrolysis of ester, thioester, amide, peptide and isopeptide bonds formed by the C-terminal Gly of ubiquitin (a 76-residue protein attached to proteins as an intracellular targeting signal).</text>
        <dbReference type="EC" id="3.4.19.12"/>
    </reaction>
</comment>
<comment type="cofactor">
    <molecule>Papain-like protease</molecule>
    <cofactor evidence="2">
        <name>Zn(2+)</name>
        <dbReference type="ChEBI" id="CHEBI:29105"/>
    </cofactor>
</comment>
<comment type="subunit">
    <molecule>Non-structural protein 2</molecule>
    <text evidence="2">Interacts with host PHB and PHB2.</text>
</comment>
<comment type="subunit">
    <molecule>Non-structural protein 4</molecule>
    <text evidence="2">Interacts with papain-like protease and non-structural protein 6.</text>
</comment>
<comment type="subunit">
    <molecule>3C-like proteinase</molecule>
    <text evidence="2 18">Monomer (PubMed:18987156). Homodimer (PubMed:18987156). Only the homodimer shows catalytic activity (By similarity).</text>
</comment>
<comment type="subunit">
    <molecule>Non-structural protein 7</molecule>
    <text evidence="2">Eight copies of nsp7 and eight copies of nsp8 assemble to form a heterohexadecamer dsRNA-encircling ring structure.</text>
</comment>
<comment type="subunit">
    <molecule>Non-structural protein 8</molecule>
    <text evidence="2">Eight copies of nsp7 and eight copies of nsp8 assemble to form a heterohexadecamer dsRNA-encircling ring structure (By similarity). Interacts with ORF6 protein (By similarity).</text>
</comment>
<comment type="subunit">
    <molecule>Non-structural protein 9</molecule>
    <text evidence="2">Homodimer.</text>
</comment>
<comment type="subunit">
    <molecule>Non-structural protein 10</molecule>
    <text evidence="2">Homododecamer.</text>
</comment>
<comment type="subcellular location">
    <molecule>Papain-like protease</molecule>
    <subcellularLocation>
        <location evidence="4">Host endoplasmic reticulum membrane</location>
        <topology evidence="19">Multi-pass membrane protein</topology>
    </subcellularLocation>
    <subcellularLocation>
        <location evidence="2">Host cytoplasm</location>
    </subcellularLocation>
    <text evidence="4">Gammacoronaviruses induce membrane zippering to form zippered endoplasmic reticulum (zER).</text>
</comment>
<comment type="subcellular location">
    <molecule>Non-structural protein 4</molecule>
    <subcellularLocation>
        <location evidence="4">Host endoplasmic reticulum membrane</location>
        <topology evidence="19">Multi-pass membrane protein</topology>
    </subcellularLocation>
    <subcellularLocation>
        <location evidence="2">Host cytoplasm</location>
    </subcellularLocation>
    <text evidence="2 4">Localizes in virally-induced cytoplasmic double-membrane vesicles (By similarity). Gammacoronaviruses induce membrane zippering to form zippered endoplasmic reticulum (zER) (By similarity).</text>
</comment>
<comment type="subcellular location">
    <molecule>Non-structural protein 6</molecule>
    <subcellularLocation>
        <location evidence="4">Host endoplasmic reticulum membrane</location>
        <topology evidence="19">Multi-pass membrane protein</topology>
    </subcellularLocation>
    <text evidence="4">Gammacoronaviruses induce membrane zippering to form zippered endoplasmic reticulum (zER).</text>
</comment>
<comment type="subcellular location">
    <molecule>Non-structural protein 7</molecule>
    <subcellularLocation>
        <location evidence="1">Host cytoplasm</location>
        <location evidence="1">Host perinuclear region</location>
    </subcellularLocation>
    <subcellularLocation>
        <location evidence="5">Host cytoplasm</location>
    </subcellularLocation>
    <subcellularLocation>
        <location evidence="5">Host endoplasmic reticulum</location>
    </subcellularLocation>
    <text>nsp7, nsp8, nsp9 and nsp10 are localized in cytoplasmic foci, largely perinuclear. Late in infection, they merge into confluent complexes.</text>
</comment>
<comment type="subcellular location">
    <molecule>Non-structural protein 8</molecule>
    <subcellularLocation>
        <location evidence="2">Host cytoplasm</location>
        <location evidence="2">Host perinuclear region</location>
    </subcellularLocation>
    <subcellularLocation>
        <location evidence="5">Host cytoplasm</location>
    </subcellularLocation>
    <subcellularLocation>
        <location evidence="5">Host endoplasmic reticulum</location>
    </subcellularLocation>
    <text>nsp7, nsp8, nsp9 and nsp10 are localized in cytoplasmic foci, largely perinuclear. Late in infection, they merge into confluent complexes.</text>
</comment>
<comment type="subcellular location">
    <molecule>Non-structural protein 9</molecule>
    <subcellularLocation>
        <location evidence="1">Host cytoplasm</location>
        <location evidence="1">Host perinuclear region</location>
    </subcellularLocation>
    <subcellularLocation>
        <location evidence="5">Host cytoplasm</location>
    </subcellularLocation>
    <subcellularLocation>
        <location evidence="5">Host endoplasmic reticulum</location>
    </subcellularLocation>
    <text>nsp7, nsp8, nsp9 and nsp10 are localized in cytoplasmic foci, largely perinuclear. Late in infection, they merge into confluent complexes.</text>
</comment>
<comment type="subcellular location">
    <molecule>Non-structural protein 10</molecule>
    <subcellularLocation>
        <location evidence="1">Host cytoplasm</location>
        <location evidence="1">Host perinuclear region</location>
    </subcellularLocation>
    <subcellularLocation>
        <location evidence="5">Host cytoplasm</location>
    </subcellularLocation>
    <subcellularLocation>
        <location evidence="5">Host endoplasmic reticulum</location>
    </subcellularLocation>
    <text>nsp7, nsp8, nsp9 and nsp10 are localized in cytoplasmic foci, largely perinuclear. Late in infection, they merge into confluent complexes.</text>
</comment>
<comment type="alternative products">
    <event type="ribosomal frameshifting"/>
    <isoform>
        <id>P0C6V5-1</id>
        <name>Replicase polyprotein 1a</name>
        <name>pp1a</name>
        <name>ORF1a polyprotein</name>
        <sequence type="displayed"/>
    </isoform>
    <isoform>
        <id>P0C6Y3-1</id>
        <name>Replicase polyprotein 1ab</name>
        <name>pp1ab</name>
        <sequence type="external"/>
    </isoform>
    <text evidence="19">Isoform Replicase polyprotein 1ab is produced by -1 ribosomal frameshifting at the 1a-1b genes boundary. Isoform Replicase polyprotein 1a is produced by conventional translation.</text>
</comment>
<comment type="domain">
    <molecule>Papain-like protease</molecule>
    <text evidence="2">The hydrophobic region HD1 probably mediates the membrane association of the replication complex.</text>
</comment>
<comment type="domain">
    <molecule>Non-structural protein 4</molecule>
    <text evidence="2">The hydrophobic region HD2 probably mediates the membrane association of the replication complex.</text>
</comment>
<comment type="domain">
    <molecule>Non-structural protein 6</molecule>
    <text evidence="2">The hydrophobic region HD3 probably mediates the membrane association of the replication complex.</text>
</comment>
<comment type="PTM">
    <molecule>Isoform Replicase polyprotein 1a</molecule>
    <text evidence="2">Specific enzymatic cleavages in vivo by its own proteases yield mature proteins (By similarity). 3C-like proteinase nsp5 liberates nsps 6-16 from the polyprotein (By similarity). Papain-like and 3C-like proteinases are autocatalytically processed.</text>
</comment>
<comment type="PTM">
    <molecule>Non-structural protein 4</molecule>
    <text evidence="3">N-glycosylated.</text>
</comment>
<comment type="similarity">
    <text evidence="19">Belongs to the coronaviruses polyprotein 1ab family.</text>
</comment>
<name>R1A_IBVM</name>
<proteinExistence type="evidence at protein level"/>
<dbReference type="EC" id="3.4.19.12" evidence="2"/>
<dbReference type="EC" id="3.4.22.-" evidence="2"/>
<dbReference type="EMBL" id="DQ834384">
    <property type="protein sequence ID" value="ABI26421.1"/>
    <property type="molecule type" value="Genomic_RNA"/>
</dbReference>
<dbReference type="EMBL" id="AY851295">
    <property type="protein sequence ID" value="AAW33784.1"/>
    <property type="molecule type" value="Genomic_RNA"/>
</dbReference>
<dbReference type="PDB" id="3EWO">
    <property type="method" value="X-ray"/>
    <property type="resolution" value="1.80 A"/>
    <property type="chains" value="A/B=1005-1178"/>
</dbReference>
<dbReference type="PDB" id="3EWP">
    <property type="method" value="X-ray"/>
    <property type="resolution" value="2.00 A"/>
    <property type="chains" value="A/B=1005-1178"/>
</dbReference>
<dbReference type="PDB" id="3LD1">
    <property type="method" value="X-ray"/>
    <property type="resolution" value="2.50 A"/>
    <property type="chains" value="A=13-371"/>
</dbReference>
<dbReference type="PDBsum" id="3EWO"/>
<dbReference type="PDBsum" id="3EWP"/>
<dbReference type="PDBsum" id="3LD1"/>
<dbReference type="SMR" id="P0C6V5"/>
<dbReference type="MEROPS" id="C30.002"/>
<dbReference type="SABIO-RK" id="P0C6V5"/>
<dbReference type="EvolutionaryTrace" id="P0C6V5"/>
<dbReference type="Proteomes" id="UP000007642">
    <property type="component" value="Genome"/>
</dbReference>
<dbReference type="Proteomes" id="UP000096468">
    <property type="component" value="Genome"/>
</dbReference>
<dbReference type="GO" id="GO:0044167">
    <property type="term" value="C:host cell endoplasmic reticulum membrane"/>
    <property type="evidence" value="ECO:0007669"/>
    <property type="project" value="UniProtKB-SubCell"/>
</dbReference>
<dbReference type="GO" id="GO:0044220">
    <property type="term" value="C:host cell perinuclear region of cytoplasm"/>
    <property type="evidence" value="ECO:0007669"/>
    <property type="project" value="UniProtKB-SubCell"/>
</dbReference>
<dbReference type="GO" id="GO:0016020">
    <property type="term" value="C:membrane"/>
    <property type="evidence" value="ECO:0007669"/>
    <property type="project" value="UniProtKB-KW"/>
</dbReference>
<dbReference type="GO" id="GO:0004197">
    <property type="term" value="F:cysteine-type endopeptidase activity"/>
    <property type="evidence" value="ECO:0007669"/>
    <property type="project" value="InterPro"/>
</dbReference>
<dbReference type="GO" id="GO:0016829">
    <property type="term" value="F:lyase activity"/>
    <property type="evidence" value="ECO:0007669"/>
    <property type="project" value="UniProtKB-KW"/>
</dbReference>
<dbReference type="GO" id="GO:0008242">
    <property type="term" value="F:omega peptidase activity"/>
    <property type="evidence" value="ECO:0007669"/>
    <property type="project" value="InterPro"/>
</dbReference>
<dbReference type="GO" id="GO:0003723">
    <property type="term" value="F:RNA binding"/>
    <property type="evidence" value="ECO:0007669"/>
    <property type="project" value="UniProtKB-KW"/>
</dbReference>
<dbReference type="GO" id="GO:0016740">
    <property type="term" value="F:transferase activity"/>
    <property type="evidence" value="ECO:0007669"/>
    <property type="project" value="InterPro"/>
</dbReference>
<dbReference type="GO" id="GO:0008270">
    <property type="term" value="F:zinc ion binding"/>
    <property type="evidence" value="ECO:0007669"/>
    <property type="project" value="UniProtKB-KW"/>
</dbReference>
<dbReference type="GO" id="GO:0006508">
    <property type="term" value="P:proteolysis"/>
    <property type="evidence" value="ECO:0007669"/>
    <property type="project" value="UniProtKB-KW"/>
</dbReference>
<dbReference type="GO" id="GO:0010506">
    <property type="term" value="P:regulation of autophagy"/>
    <property type="evidence" value="ECO:0007669"/>
    <property type="project" value="InterPro"/>
</dbReference>
<dbReference type="GO" id="GO:0039520">
    <property type="term" value="P:symbiont-mediated activation of host autophagy"/>
    <property type="evidence" value="ECO:0007669"/>
    <property type="project" value="UniProtKB-KW"/>
</dbReference>
<dbReference type="GO" id="GO:0019079">
    <property type="term" value="P:viral genome replication"/>
    <property type="evidence" value="ECO:0007669"/>
    <property type="project" value="InterPro"/>
</dbReference>
<dbReference type="GO" id="GO:0019082">
    <property type="term" value="P:viral protein processing"/>
    <property type="evidence" value="ECO:0007669"/>
    <property type="project" value="InterPro"/>
</dbReference>
<dbReference type="GO" id="GO:0075523">
    <property type="term" value="P:viral translational frameshifting"/>
    <property type="evidence" value="ECO:0007669"/>
    <property type="project" value="UniProtKB-KW"/>
</dbReference>
<dbReference type="CDD" id="cd21512">
    <property type="entry name" value="cv_gamma-delta_Nsp2_IBV-like"/>
    <property type="match status" value="1"/>
</dbReference>
<dbReference type="CDD" id="cd21473">
    <property type="entry name" value="cv_Nsp4_TM"/>
    <property type="match status" value="1"/>
</dbReference>
<dbReference type="CDD" id="cd21559">
    <property type="entry name" value="gammaCoV-Nsp6"/>
    <property type="match status" value="1"/>
</dbReference>
<dbReference type="CDD" id="cd21902">
    <property type="entry name" value="gammaCoV_Nsp10"/>
    <property type="match status" value="1"/>
</dbReference>
<dbReference type="CDD" id="cd21667">
    <property type="entry name" value="gammaCoV_Nsp5_Mpro"/>
    <property type="match status" value="1"/>
</dbReference>
<dbReference type="CDD" id="cd21828">
    <property type="entry name" value="gammaCoV_Nsp7"/>
    <property type="match status" value="1"/>
</dbReference>
<dbReference type="CDD" id="cd21832">
    <property type="entry name" value="gammaCoV_Nsp8"/>
    <property type="match status" value="1"/>
</dbReference>
<dbReference type="CDD" id="cd21899">
    <property type="entry name" value="gammaCoV_Nsp9"/>
    <property type="match status" value="1"/>
</dbReference>
<dbReference type="CDD" id="cd21733">
    <property type="entry name" value="gammaCoV_PLPro"/>
    <property type="match status" value="1"/>
</dbReference>
<dbReference type="CDD" id="cd21557">
    <property type="entry name" value="Macro_X_Nsp3-like"/>
    <property type="match status" value="1"/>
</dbReference>
<dbReference type="CDD" id="cd21710">
    <property type="entry name" value="TM_Y_gammaCoV_Nsp3_C"/>
    <property type="match status" value="1"/>
</dbReference>
<dbReference type="Gene3D" id="1.10.8.1190">
    <property type="match status" value="1"/>
</dbReference>
<dbReference type="Gene3D" id="2.60.120.1680">
    <property type="match status" value="1"/>
</dbReference>
<dbReference type="Gene3D" id="6.10.250.2820">
    <property type="match status" value="1"/>
</dbReference>
<dbReference type="Gene3D" id="1.10.150.420">
    <property type="entry name" value="Coronavirus nonstructural protein 4 C-terminus"/>
    <property type="match status" value="1"/>
</dbReference>
<dbReference type="Gene3D" id="3.40.220.10">
    <property type="entry name" value="Leucine Aminopeptidase, subunit E, domain 1"/>
    <property type="match status" value="1"/>
</dbReference>
<dbReference type="Gene3D" id="1.10.1840.10">
    <property type="entry name" value="main proteinase (3clpro) structure, domain 3"/>
    <property type="match status" value="1"/>
</dbReference>
<dbReference type="Gene3D" id="1.10.8.370">
    <property type="entry name" value="nsp7 replicase"/>
    <property type="match status" value="1"/>
</dbReference>
<dbReference type="Gene3D" id="3.30.70.3540">
    <property type="entry name" value="Nsp8 replicase, head domain"/>
    <property type="match status" value="1"/>
</dbReference>
<dbReference type="Gene3D" id="2.40.10.250">
    <property type="entry name" value="Replicase NSP9"/>
    <property type="match status" value="1"/>
</dbReference>
<dbReference type="Gene3D" id="2.40.10.10">
    <property type="entry name" value="Trypsin-like serine proteases"/>
    <property type="match status" value="2"/>
</dbReference>
<dbReference type="InterPro" id="IPR049894">
    <property type="entry name" value="COV_NSP3_3ECTO"/>
</dbReference>
<dbReference type="InterPro" id="IPR043611">
    <property type="entry name" value="CoV_NSP3_C"/>
</dbReference>
<dbReference type="InterPro" id="IPR047566">
    <property type="entry name" value="CoV_NSP3_Y"/>
</dbReference>
<dbReference type="InterPro" id="IPR032505">
    <property type="entry name" value="CoV_NSP4_C"/>
</dbReference>
<dbReference type="InterPro" id="IPR043612">
    <property type="entry name" value="CoV_NSP4_N"/>
</dbReference>
<dbReference type="InterPro" id="IPR002589">
    <property type="entry name" value="Macro_dom"/>
</dbReference>
<dbReference type="InterPro" id="IPR043472">
    <property type="entry name" value="Macro_dom-like"/>
</dbReference>
<dbReference type="InterPro" id="IPR044371">
    <property type="entry name" value="Macro_X_NSP3-like"/>
</dbReference>
<dbReference type="InterPro" id="IPR036333">
    <property type="entry name" value="NSP10_sf_CoV"/>
</dbReference>
<dbReference type="InterPro" id="IPR040795">
    <property type="entry name" value="NSP2_gammaCoV"/>
</dbReference>
<dbReference type="InterPro" id="IPR044383">
    <property type="entry name" value="NSP2_IBV-like"/>
</dbReference>
<dbReference type="InterPro" id="IPR044357">
    <property type="entry name" value="NSP3_Ubl1_dom_CoV"/>
</dbReference>
<dbReference type="InterPro" id="IPR044353">
    <property type="entry name" value="Nsp3_Ubl2_dom_CoV"/>
</dbReference>
<dbReference type="InterPro" id="IPR038123">
    <property type="entry name" value="NSP4_C_sf_CoV"/>
</dbReference>
<dbReference type="InterPro" id="IPR044308">
    <property type="entry name" value="NSP5_Mpro_GammaCoV"/>
</dbReference>
<dbReference type="InterPro" id="IPR043610">
    <property type="entry name" value="NSP6_CoV"/>
</dbReference>
<dbReference type="InterPro" id="IPR044368">
    <property type="entry name" value="NSP6_gammaCoV"/>
</dbReference>
<dbReference type="InterPro" id="IPR014828">
    <property type="entry name" value="NSP7_CoV"/>
</dbReference>
<dbReference type="InterPro" id="IPR037204">
    <property type="entry name" value="NSP7_sf_CoV"/>
</dbReference>
<dbReference type="InterPro" id="IPR014829">
    <property type="entry name" value="NSP8_CoV"/>
</dbReference>
<dbReference type="InterPro" id="IPR037230">
    <property type="entry name" value="NSP8_sf_CoV"/>
</dbReference>
<dbReference type="InterPro" id="IPR014822">
    <property type="entry name" value="NSP9_CoV"/>
</dbReference>
<dbReference type="InterPro" id="IPR036499">
    <property type="entry name" value="NSP9_sf_CoV"/>
</dbReference>
<dbReference type="InterPro" id="IPR013016">
    <property type="entry name" value="Peptidase_C16_CoV"/>
</dbReference>
<dbReference type="InterPro" id="IPR008740">
    <property type="entry name" value="Peptidase_C30_CoV"/>
</dbReference>
<dbReference type="InterPro" id="IPR043477">
    <property type="entry name" value="Peptidase_C30_dom3_CoV"/>
</dbReference>
<dbReference type="InterPro" id="IPR009003">
    <property type="entry name" value="Peptidase_S1_PA"/>
</dbReference>
<dbReference type="InterPro" id="IPR043504">
    <property type="entry name" value="Peptidase_S1_PA_chymotrypsin"/>
</dbReference>
<dbReference type="InterPro" id="IPR043503">
    <property type="entry name" value="PLpro_palm_finger_dom_CoV"/>
</dbReference>
<dbReference type="InterPro" id="IPR043178">
    <property type="entry name" value="PLpro_thumb_sf_CoV"/>
</dbReference>
<dbReference type="InterPro" id="IPR018995">
    <property type="entry name" value="RNA_synth_NSP10_CoV"/>
</dbReference>
<dbReference type="Pfam" id="PF09401">
    <property type="entry name" value="CoV_NSP10"/>
    <property type="match status" value="1"/>
</dbReference>
<dbReference type="Pfam" id="PF19218">
    <property type="entry name" value="CoV_NSP3_C"/>
    <property type="match status" value="1"/>
</dbReference>
<dbReference type="Pfam" id="PF16348">
    <property type="entry name" value="CoV_NSP4_C"/>
    <property type="match status" value="1"/>
</dbReference>
<dbReference type="Pfam" id="PF19217">
    <property type="entry name" value="CoV_NSP4_N"/>
    <property type="match status" value="1"/>
</dbReference>
<dbReference type="Pfam" id="PF19213">
    <property type="entry name" value="CoV_NSP6"/>
    <property type="match status" value="1"/>
</dbReference>
<dbReference type="Pfam" id="PF08716">
    <property type="entry name" value="CoV_NSP7"/>
    <property type="match status" value="1"/>
</dbReference>
<dbReference type="Pfam" id="PF08717">
    <property type="entry name" value="CoV_NSP8"/>
    <property type="match status" value="1"/>
</dbReference>
<dbReference type="Pfam" id="PF08710">
    <property type="entry name" value="CoV_NSP9"/>
    <property type="match status" value="1"/>
</dbReference>
<dbReference type="Pfam" id="PF08715">
    <property type="entry name" value="CoV_peptidase"/>
    <property type="match status" value="1"/>
</dbReference>
<dbReference type="Pfam" id="PF01661">
    <property type="entry name" value="Macro"/>
    <property type="match status" value="1"/>
</dbReference>
<dbReference type="Pfam" id="PF17896">
    <property type="entry name" value="NSP2_gammaCoV"/>
    <property type="match status" value="1"/>
</dbReference>
<dbReference type="Pfam" id="PF05409">
    <property type="entry name" value="Peptidase_C30"/>
    <property type="match status" value="1"/>
</dbReference>
<dbReference type="SMART" id="SM00506">
    <property type="entry name" value="A1pp"/>
    <property type="match status" value="1"/>
</dbReference>
<dbReference type="SUPFAM" id="SSF144246">
    <property type="entry name" value="Coronavirus NSP10-like"/>
    <property type="match status" value="1"/>
</dbReference>
<dbReference type="SUPFAM" id="SSF140367">
    <property type="entry name" value="Coronavirus NSP7-like"/>
    <property type="match status" value="1"/>
</dbReference>
<dbReference type="SUPFAM" id="SSF143076">
    <property type="entry name" value="Coronavirus NSP8-like"/>
    <property type="match status" value="1"/>
</dbReference>
<dbReference type="SUPFAM" id="SSF52949">
    <property type="entry name" value="Macro domain-like"/>
    <property type="match status" value="1"/>
</dbReference>
<dbReference type="SUPFAM" id="SSF101816">
    <property type="entry name" value="Replicase NSP9"/>
    <property type="match status" value="1"/>
</dbReference>
<dbReference type="SUPFAM" id="SSF50494">
    <property type="entry name" value="Trypsin-like serine proteases"/>
    <property type="match status" value="1"/>
</dbReference>
<dbReference type="PROSITE" id="PS51993">
    <property type="entry name" value="COV_3ECTO"/>
    <property type="match status" value="1"/>
</dbReference>
<dbReference type="PROSITE" id="PS51952">
    <property type="entry name" value="COV_EXON_MTASE_COACT"/>
    <property type="match status" value="1"/>
</dbReference>
<dbReference type="PROSITE" id="PS51992">
    <property type="entry name" value="COV_NSP3_Y"/>
    <property type="match status" value="1"/>
</dbReference>
<dbReference type="PROSITE" id="PS51943">
    <property type="entry name" value="COV_NSP3A_UBL"/>
    <property type="match status" value="1"/>
</dbReference>
<dbReference type="PROSITE" id="PS51944">
    <property type="entry name" value="COV_NSP3D_UBL"/>
    <property type="match status" value="1"/>
</dbReference>
<dbReference type="PROSITE" id="PS51946">
    <property type="entry name" value="COV_NSP4C"/>
    <property type="match status" value="1"/>
</dbReference>
<dbReference type="PROSITE" id="PS51949">
    <property type="entry name" value="COV_NSP7"/>
    <property type="match status" value="1"/>
</dbReference>
<dbReference type="PROSITE" id="PS51950">
    <property type="entry name" value="COV_NSP8"/>
    <property type="match status" value="1"/>
</dbReference>
<dbReference type="PROSITE" id="PS51951">
    <property type="entry name" value="COV_NSP9_SSRNA_BD"/>
    <property type="match status" value="1"/>
</dbReference>
<dbReference type="PROSITE" id="PS51442">
    <property type="entry name" value="M_PRO"/>
    <property type="match status" value="1"/>
</dbReference>
<dbReference type="PROSITE" id="PS51154">
    <property type="entry name" value="MACRO"/>
    <property type="match status" value="1"/>
</dbReference>
<dbReference type="PROSITE" id="PS51124">
    <property type="entry name" value="PEPTIDASE_C16"/>
    <property type="match status" value="1"/>
</dbReference>